<sequence>MTELLQSLNTQHEFVGRHNGPNHADQQKMLSTINAESLDALIAQTVPAQIRLEKPMQLAEAQSEADMLASIKKFADLNQVKRTFIGQGYYNTFTPNVILRNVLENPGWYTAYTPYQPEISQGRLESLLNYQQMVMDLTGMDIANASLLDEATAAAEAMTLCQRAGKSKSKVFFVADDVHPQTIEVIKTRAKYFGFDVVIGNVDALPQTEAFGALLQYPSTTGEVRDLTDVIAQAQANKTLVSVATDLLASALVKPAGEMGADVVIGSAQRFGVPMGYGGPHAAFMATREQHKRTMPGRVIGVSIDAKGNQALRMAMQTREQHIRREKATSNICTAQALLANMASFFAVYHGEEGIRTIARRTHHMTAILAAGLTKSGYELAHNAFFDTITINTGDKTQALYAKAQAADINLRLLDGQIGISFDETTTVADIDALFAIFDVKESVNALSTDIAGNEFAAIPEACRRTSRFLSHPVFNTHHSETQMMRYLKQLENKDFSLTHGMIPLGSCTMKLNAAAEMIPVTWPEFGALHPFAPIEQAAGYTALAEDLKAKLCEITGYDAFSLQPNSGASGEYAGLIAIQRYHESRGEGHRNVCLIPSSAHGTNPATAAMVSMKVVVVKCDENGNIDLVDLAAKIEKHQENLSSIMITYPSTHGVYEEQVKEVCEMVHAAGGQVYLDGANMNAQVGLTSPGFIGSDVSHLNLHKTFCIPHGGGGPGMGPIGVKSHLAPFLPGHIENGVEGKEFAVSAADLGSASILPISWAYIAMMGADGLTEATKVAILNANYVMERLRPHYPVLYRGTNGRVAHECIIDIRPLKEETGISEEDIAKRLMDYGFHAPTMSFPVAGTLMVEPTESEDLEELDRFCDAMIAIREEMTKVKNGEWPLENNPLVNAPHTQVDLMEEQWDRPYPREIACFPSAATKRSKYWPTVNRVDNVYGDRNLVCSCPGIENYEE</sequence>
<organism>
    <name type="scientific">Vibrio vulnificus (strain YJ016)</name>
    <dbReference type="NCBI Taxonomy" id="196600"/>
    <lineage>
        <taxon>Bacteria</taxon>
        <taxon>Pseudomonadati</taxon>
        <taxon>Pseudomonadota</taxon>
        <taxon>Gammaproteobacteria</taxon>
        <taxon>Vibrionales</taxon>
        <taxon>Vibrionaceae</taxon>
        <taxon>Vibrio</taxon>
    </lineage>
</organism>
<accession>Q7MEH9</accession>
<name>GCSP_VIBVY</name>
<keyword id="KW-0560">Oxidoreductase</keyword>
<keyword id="KW-0663">Pyridoxal phosphate</keyword>
<reference key="1">
    <citation type="journal article" date="2003" name="Genome Res.">
        <title>Comparative genome analysis of Vibrio vulnificus, a marine pathogen.</title>
        <authorList>
            <person name="Chen C.-Y."/>
            <person name="Wu K.-M."/>
            <person name="Chang Y.-C."/>
            <person name="Chang C.-H."/>
            <person name="Tsai H.-C."/>
            <person name="Liao T.-L."/>
            <person name="Liu Y.-M."/>
            <person name="Chen H.-J."/>
            <person name="Shen A.B.-T."/>
            <person name="Li J.-C."/>
            <person name="Su T.-L."/>
            <person name="Shao C.-P."/>
            <person name="Lee C.-T."/>
            <person name="Hor L.-I."/>
            <person name="Tsai S.-F."/>
        </authorList>
    </citation>
    <scope>NUCLEOTIDE SEQUENCE [LARGE SCALE GENOMIC DNA]</scope>
    <source>
        <strain>YJ016</strain>
    </source>
</reference>
<protein>
    <recommendedName>
        <fullName evidence="1">Glycine dehydrogenase (decarboxylating)</fullName>
        <ecNumber evidence="1">1.4.4.2</ecNumber>
    </recommendedName>
    <alternativeName>
        <fullName evidence="1">Glycine cleavage system P-protein</fullName>
    </alternativeName>
    <alternativeName>
        <fullName evidence="1">Glycine decarboxylase</fullName>
    </alternativeName>
    <alternativeName>
        <fullName evidence="1">Glycine dehydrogenase (aminomethyl-transferring)</fullName>
    </alternativeName>
</protein>
<comment type="function">
    <text evidence="1">The glycine cleavage system catalyzes the degradation of glycine. The P protein binds the alpha-amino group of glycine through its pyridoxal phosphate cofactor; CO(2) is released and the remaining methylamine moiety is then transferred to the lipoamide cofactor of the H protein.</text>
</comment>
<comment type="catalytic activity">
    <reaction evidence="1">
        <text>N(6)-[(R)-lipoyl]-L-lysyl-[glycine-cleavage complex H protein] + glycine + H(+) = N(6)-[(R)-S(8)-aminomethyldihydrolipoyl]-L-lysyl-[glycine-cleavage complex H protein] + CO2</text>
        <dbReference type="Rhea" id="RHEA:24304"/>
        <dbReference type="Rhea" id="RHEA-COMP:10494"/>
        <dbReference type="Rhea" id="RHEA-COMP:10495"/>
        <dbReference type="ChEBI" id="CHEBI:15378"/>
        <dbReference type="ChEBI" id="CHEBI:16526"/>
        <dbReference type="ChEBI" id="CHEBI:57305"/>
        <dbReference type="ChEBI" id="CHEBI:83099"/>
        <dbReference type="ChEBI" id="CHEBI:83143"/>
        <dbReference type="EC" id="1.4.4.2"/>
    </reaction>
</comment>
<comment type="cofactor">
    <cofactor evidence="1">
        <name>pyridoxal 5'-phosphate</name>
        <dbReference type="ChEBI" id="CHEBI:597326"/>
    </cofactor>
</comment>
<comment type="subunit">
    <text evidence="1">The glycine cleavage system is composed of four proteins: P, T, L and H.</text>
</comment>
<comment type="similarity">
    <text evidence="1">Belongs to the GcvP family.</text>
</comment>
<evidence type="ECO:0000255" key="1">
    <source>
        <dbReference type="HAMAP-Rule" id="MF_00711"/>
    </source>
</evidence>
<gene>
    <name evidence="1" type="primary">gcvP</name>
    <name type="ordered locus">VVA0691</name>
</gene>
<proteinExistence type="inferred from homology"/>
<dbReference type="EC" id="1.4.4.2" evidence="1"/>
<dbReference type="EMBL" id="BA000038">
    <property type="protein sequence ID" value="BAC96717.1"/>
    <property type="molecule type" value="Genomic_DNA"/>
</dbReference>
<dbReference type="RefSeq" id="WP_011152031.1">
    <property type="nucleotide sequence ID" value="NC_005140.1"/>
</dbReference>
<dbReference type="SMR" id="Q7MEH9"/>
<dbReference type="STRING" id="672.VV93_v1c36900"/>
<dbReference type="KEGG" id="vvy:VVA0691"/>
<dbReference type="PATRIC" id="fig|196600.6.peg.3886"/>
<dbReference type="eggNOG" id="COG0403">
    <property type="taxonomic scope" value="Bacteria"/>
</dbReference>
<dbReference type="eggNOG" id="COG1003">
    <property type="taxonomic scope" value="Bacteria"/>
</dbReference>
<dbReference type="HOGENOM" id="CLU_004620_1_1_6"/>
<dbReference type="Proteomes" id="UP000002675">
    <property type="component" value="Chromosome II"/>
</dbReference>
<dbReference type="GO" id="GO:0005829">
    <property type="term" value="C:cytosol"/>
    <property type="evidence" value="ECO:0007669"/>
    <property type="project" value="TreeGrafter"/>
</dbReference>
<dbReference type="GO" id="GO:0005960">
    <property type="term" value="C:glycine cleavage complex"/>
    <property type="evidence" value="ECO:0007669"/>
    <property type="project" value="TreeGrafter"/>
</dbReference>
<dbReference type="GO" id="GO:0016594">
    <property type="term" value="F:glycine binding"/>
    <property type="evidence" value="ECO:0007669"/>
    <property type="project" value="TreeGrafter"/>
</dbReference>
<dbReference type="GO" id="GO:0004375">
    <property type="term" value="F:glycine dehydrogenase (decarboxylating) activity"/>
    <property type="evidence" value="ECO:0007669"/>
    <property type="project" value="UniProtKB-EC"/>
</dbReference>
<dbReference type="GO" id="GO:0030170">
    <property type="term" value="F:pyridoxal phosphate binding"/>
    <property type="evidence" value="ECO:0007669"/>
    <property type="project" value="TreeGrafter"/>
</dbReference>
<dbReference type="GO" id="GO:0019464">
    <property type="term" value="P:glycine decarboxylation via glycine cleavage system"/>
    <property type="evidence" value="ECO:0007669"/>
    <property type="project" value="UniProtKB-UniRule"/>
</dbReference>
<dbReference type="CDD" id="cd00613">
    <property type="entry name" value="GDC-P"/>
    <property type="match status" value="2"/>
</dbReference>
<dbReference type="FunFam" id="3.40.640.10:FF:000005">
    <property type="entry name" value="Glycine dehydrogenase (decarboxylating), mitochondrial"/>
    <property type="match status" value="1"/>
</dbReference>
<dbReference type="FunFam" id="3.90.1150.10:FF:000007">
    <property type="entry name" value="Glycine dehydrogenase (decarboxylating), mitochondrial"/>
    <property type="match status" value="1"/>
</dbReference>
<dbReference type="FunFam" id="3.40.640.10:FF:000007">
    <property type="entry name" value="glycine dehydrogenase (Decarboxylating), mitochondrial"/>
    <property type="match status" value="1"/>
</dbReference>
<dbReference type="Gene3D" id="3.90.1150.10">
    <property type="entry name" value="Aspartate Aminotransferase, domain 1"/>
    <property type="match status" value="2"/>
</dbReference>
<dbReference type="Gene3D" id="3.40.640.10">
    <property type="entry name" value="Type I PLP-dependent aspartate aminotransferase-like (Major domain)"/>
    <property type="match status" value="2"/>
</dbReference>
<dbReference type="HAMAP" id="MF_00711">
    <property type="entry name" value="GcvP"/>
    <property type="match status" value="1"/>
</dbReference>
<dbReference type="InterPro" id="IPR003437">
    <property type="entry name" value="GcvP"/>
</dbReference>
<dbReference type="InterPro" id="IPR049316">
    <property type="entry name" value="GDC-P_C"/>
</dbReference>
<dbReference type="InterPro" id="IPR049315">
    <property type="entry name" value="GDC-P_N"/>
</dbReference>
<dbReference type="InterPro" id="IPR020581">
    <property type="entry name" value="GDC_P"/>
</dbReference>
<dbReference type="InterPro" id="IPR015424">
    <property type="entry name" value="PyrdxlP-dep_Trfase"/>
</dbReference>
<dbReference type="InterPro" id="IPR015421">
    <property type="entry name" value="PyrdxlP-dep_Trfase_major"/>
</dbReference>
<dbReference type="InterPro" id="IPR015422">
    <property type="entry name" value="PyrdxlP-dep_Trfase_small"/>
</dbReference>
<dbReference type="NCBIfam" id="TIGR00461">
    <property type="entry name" value="gcvP"/>
    <property type="match status" value="1"/>
</dbReference>
<dbReference type="PANTHER" id="PTHR11773:SF13">
    <property type="entry name" value="GLYCINE DEHYDROGENASE (DECARBOXYLATING)"/>
    <property type="match status" value="1"/>
</dbReference>
<dbReference type="PANTHER" id="PTHR11773">
    <property type="entry name" value="GLYCINE DEHYDROGENASE, DECARBOXYLATING"/>
    <property type="match status" value="1"/>
</dbReference>
<dbReference type="Pfam" id="PF21478">
    <property type="entry name" value="GcvP2_C"/>
    <property type="match status" value="1"/>
</dbReference>
<dbReference type="Pfam" id="PF02347">
    <property type="entry name" value="GDC-P"/>
    <property type="match status" value="2"/>
</dbReference>
<dbReference type="SUPFAM" id="SSF53383">
    <property type="entry name" value="PLP-dependent transferases"/>
    <property type="match status" value="2"/>
</dbReference>
<feature type="chain" id="PRO_0000166947" description="Glycine dehydrogenase (decarboxylating)">
    <location>
        <begin position="1"/>
        <end position="954"/>
    </location>
</feature>
<feature type="modified residue" description="N6-(pyridoxal phosphate)lysine" evidence="1">
    <location>
        <position position="704"/>
    </location>
</feature>